<feature type="chain" id="PRO_0000328358" description="Probable derlin-1 homolog">
    <location>
        <begin position="1"/>
        <end position="242"/>
    </location>
</feature>
<feature type="topological domain" description="Cytoplasmic" evidence="2">
    <location>
        <begin position="1"/>
        <end position="18"/>
    </location>
</feature>
<feature type="transmembrane region" description="Helical" evidence="2">
    <location>
        <begin position="19"/>
        <end position="39"/>
    </location>
</feature>
<feature type="topological domain" description="Lumenal" evidence="2">
    <location>
        <begin position="40"/>
        <end position="98"/>
    </location>
</feature>
<feature type="transmembrane region" description="Helical" evidence="2">
    <location>
        <begin position="99"/>
        <end position="119"/>
    </location>
</feature>
<feature type="topological domain" description="Cytoplasmic" evidence="2">
    <location>
        <begin position="120"/>
        <end position="140"/>
    </location>
</feature>
<feature type="transmembrane region" description="Helical" evidence="2">
    <location>
        <begin position="141"/>
        <end position="161"/>
    </location>
</feature>
<feature type="topological domain" description="Lumenal" evidence="2">
    <location>
        <begin position="162"/>
        <end position="167"/>
    </location>
</feature>
<feature type="transmembrane region" description="Helical" evidence="2">
    <location>
        <begin position="168"/>
        <end position="188"/>
    </location>
</feature>
<feature type="topological domain" description="Cytoplasmic" evidence="2">
    <location>
        <begin position="189"/>
        <end position="242"/>
    </location>
</feature>
<feature type="region of interest" description="Disordered" evidence="3">
    <location>
        <begin position="214"/>
        <end position="242"/>
    </location>
</feature>
<feature type="compositionally biased region" description="Basic and acidic residues" evidence="3">
    <location>
        <begin position="214"/>
        <end position="224"/>
    </location>
</feature>
<feature type="compositionally biased region" description="Gly residues" evidence="3">
    <location>
        <begin position="233"/>
        <end position="242"/>
    </location>
</feature>
<accession>Q54IC9</accession>
<sequence length="242" mass="28120">MDGVKEWFNSIPPVSRYMFAIFLGIPVLAAMHLISFNYLYLDFTFTFKHFHLWRLITAPCIISSLGPMFLFNLIFFYQYTTRLESLNYAGKSDDYLFCIIFISICNIIFGLIFEYYFLGTMTIMSLIYIYSRMNPTGTSNFYGFFSFKTIYLPWVFLVAHFLQTGHPPYSDFLAIVSGHIFFYLTDIYPRANGVPALIKTPKFITNIFNKGDRNPNNVRRDPRTGRPIQEGGYNWGQGHALG</sequence>
<reference key="1">
    <citation type="journal article" date="2005" name="Nature">
        <title>The genome of the social amoeba Dictyostelium discoideum.</title>
        <authorList>
            <person name="Eichinger L."/>
            <person name="Pachebat J.A."/>
            <person name="Gloeckner G."/>
            <person name="Rajandream M.A."/>
            <person name="Sucgang R."/>
            <person name="Berriman M."/>
            <person name="Song J."/>
            <person name="Olsen R."/>
            <person name="Szafranski K."/>
            <person name="Xu Q."/>
            <person name="Tunggal B."/>
            <person name="Kummerfeld S."/>
            <person name="Madera M."/>
            <person name="Konfortov B.A."/>
            <person name="Rivero F."/>
            <person name="Bankier A.T."/>
            <person name="Lehmann R."/>
            <person name="Hamlin N."/>
            <person name="Davies R."/>
            <person name="Gaudet P."/>
            <person name="Fey P."/>
            <person name="Pilcher K."/>
            <person name="Chen G."/>
            <person name="Saunders D."/>
            <person name="Sodergren E.J."/>
            <person name="Davis P."/>
            <person name="Kerhornou A."/>
            <person name="Nie X."/>
            <person name="Hall N."/>
            <person name="Anjard C."/>
            <person name="Hemphill L."/>
            <person name="Bason N."/>
            <person name="Farbrother P."/>
            <person name="Desany B."/>
            <person name="Just E."/>
            <person name="Morio T."/>
            <person name="Rost R."/>
            <person name="Churcher C.M."/>
            <person name="Cooper J."/>
            <person name="Haydock S."/>
            <person name="van Driessche N."/>
            <person name="Cronin A."/>
            <person name="Goodhead I."/>
            <person name="Muzny D.M."/>
            <person name="Mourier T."/>
            <person name="Pain A."/>
            <person name="Lu M."/>
            <person name="Harper D."/>
            <person name="Lindsay R."/>
            <person name="Hauser H."/>
            <person name="James K.D."/>
            <person name="Quiles M."/>
            <person name="Madan Babu M."/>
            <person name="Saito T."/>
            <person name="Buchrieser C."/>
            <person name="Wardroper A."/>
            <person name="Felder M."/>
            <person name="Thangavelu M."/>
            <person name="Johnson D."/>
            <person name="Knights A."/>
            <person name="Loulseged H."/>
            <person name="Mungall K.L."/>
            <person name="Oliver K."/>
            <person name="Price C."/>
            <person name="Quail M.A."/>
            <person name="Urushihara H."/>
            <person name="Hernandez J."/>
            <person name="Rabbinowitsch E."/>
            <person name="Steffen D."/>
            <person name="Sanders M."/>
            <person name="Ma J."/>
            <person name="Kohara Y."/>
            <person name="Sharp S."/>
            <person name="Simmonds M.N."/>
            <person name="Spiegler S."/>
            <person name="Tivey A."/>
            <person name="Sugano S."/>
            <person name="White B."/>
            <person name="Walker D."/>
            <person name="Woodward J.R."/>
            <person name="Winckler T."/>
            <person name="Tanaka Y."/>
            <person name="Shaulsky G."/>
            <person name="Schleicher M."/>
            <person name="Weinstock G.M."/>
            <person name="Rosenthal A."/>
            <person name="Cox E.C."/>
            <person name="Chisholm R.L."/>
            <person name="Gibbs R.A."/>
            <person name="Loomis W.F."/>
            <person name="Platzer M."/>
            <person name="Kay R.R."/>
            <person name="Williams J.G."/>
            <person name="Dear P.H."/>
            <person name="Noegel A.A."/>
            <person name="Barrell B.G."/>
            <person name="Kuspa A."/>
        </authorList>
    </citation>
    <scope>NUCLEOTIDE SEQUENCE [LARGE SCALE GENOMIC DNA]</scope>
    <source>
        <strain>AX4</strain>
    </source>
</reference>
<gene>
    <name evidence="5" type="primary">derl1</name>
    <name evidence="5" type="ORF">DDB_G0288833</name>
</gene>
<keyword id="KW-0256">Endoplasmic reticulum</keyword>
<keyword id="KW-0472">Membrane</keyword>
<keyword id="KW-1185">Reference proteome</keyword>
<keyword id="KW-0812">Transmembrane</keyword>
<keyword id="KW-1133">Transmembrane helix</keyword>
<keyword id="KW-0834">Unfolded protein response</keyword>
<protein>
    <recommendedName>
        <fullName evidence="4">Probable derlin-1 homolog</fullName>
    </recommendedName>
</protein>
<evidence type="ECO:0000250" key="1">
    <source>
        <dbReference type="UniProtKB" id="Q9BUN8"/>
    </source>
</evidence>
<evidence type="ECO:0000255" key="2"/>
<evidence type="ECO:0000256" key="3">
    <source>
        <dbReference type="SAM" id="MobiDB-lite"/>
    </source>
</evidence>
<evidence type="ECO:0000305" key="4"/>
<evidence type="ECO:0000312" key="5">
    <source>
        <dbReference type="dictyBase" id="DDB_G0288833"/>
    </source>
</evidence>
<proteinExistence type="inferred from homology"/>
<dbReference type="EMBL" id="AAFI02000125">
    <property type="protein sequence ID" value="EAL63038.1"/>
    <property type="molecule type" value="Genomic_DNA"/>
</dbReference>
<dbReference type="RefSeq" id="XP_636548.1">
    <property type="nucleotide sequence ID" value="XM_631456.1"/>
</dbReference>
<dbReference type="SMR" id="Q54IC9"/>
<dbReference type="FunCoup" id="Q54IC9">
    <property type="interactions" value="123"/>
</dbReference>
<dbReference type="STRING" id="44689.Q54IC9"/>
<dbReference type="PaxDb" id="44689-DDB0266772"/>
<dbReference type="EnsemblProtists" id="EAL63038">
    <property type="protein sequence ID" value="EAL63038"/>
    <property type="gene ID" value="DDB_G0288833"/>
</dbReference>
<dbReference type="GeneID" id="8626833"/>
<dbReference type="KEGG" id="ddi:DDB_G0288833"/>
<dbReference type="dictyBase" id="DDB_G0288833">
    <property type="gene designation" value="derl1"/>
</dbReference>
<dbReference type="VEuPathDB" id="AmoebaDB:DDB_G0288833"/>
<dbReference type="eggNOG" id="KOG0858">
    <property type="taxonomic scope" value="Eukaryota"/>
</dbReference>
<dbReference type="HOGENOM" id="CLU_051898_5_2_1"/>
<dbReference type="InParanoid" id="Q54IC9"/>
<dbReference type="OMA" id="DFVFMFF"/>
<dbReference type="PhylomeDB" id="Q54IC9"/>
<dbReference type="Reactome" id="R-DDI-5358346">
    <property type="pathway name" value="Hedgehog ligand biogenesis"/>
</dbReference>
<dbReference type="PRO" id="PR:Q54IC9"/>
<dbReference type="Proteomes" id="UP000002195">
    <property type="component" value="Chromosome 5"/>
</dbReference>
<dbReference type="GO" id="GO:0005789">
    <property type="term" value="C:endoplasmic reticulum membrane"/>
    <property type="evidence" value="ECO:0000250"/>
    <property type="project" value="dictyBase"/>
</dbReference>
<dbReference type="GO" id="GO:0005047">
    <property type="term" value="F:signal recognition particle binding"/>
    <property type="evidence" value="ECO:0000250"/>
    <property type="project" value="UniProtKB"/>
</dbReference>
<dbReference type="GO" id="GO:0030968">
    <property type="term" value="P:endoplasmic reticulum unfolded protein response"/>
    <property type="evidence" value="ECO:0000318"/>
    <property type="project" value="GO_Central"/>
</dbReference>
<dbReference type="GO" id="GO:0036503">
    <property type="term" value="P:ERAD pathway"/>
    <property type="evidence" value="ECO:0000250"/>
    <property type="project" value="dictyBase"/>
</dbReference>
<dbReference type="InterPro" id="IPR007599">
    <property type="entry name" value="DER1"/>
</dbReference>
<dbReference type="InterPro" id="IPR035952">
    <property type="entry name" value="Rhomboid-like_sf"/>
</dbReference>
<dbReference type="PANTHER" id="PTHR11009">
    <property type="entry name" value="DER1-LIKE PROTEIN, DERLIN"/>
    <property type="match status" value="1"/>
</dbReference>
<dbReference type="Pfam" id="PF04511">
    <property type="entry name" value="DER1"/>
    <property type="match status" value="1"/>
</dbReference>
<dbReference type="SUPFAM" id="SSF144091">
    <property type="entry name" value="Rhomboid-like"/>
    <property type="match status" value="1"/>
</dbReference>
<comment type="function">
    <text evidence="1">May be involved in the degradation process of specific misfolded endoplasmic reticulum (ER) luminal proteins. May also involved in endoplasmic reticulum stress-induced pre-emptive quality control, a mechanism that selectively attenuates the translocation of newly synthesized proteins into the endoplasmic reticulum and reroutes them to the cytosol for proteasomal degradation.</text>
</comment>
<comment type="subcellular location">
    <subcellularLocation>
        <location evidence="1">Endoplasmic reticulum membrane</location>
        <topology evidence="1">Multi-pass membrane protein</topology>
    </subcellularLocation>
</comment>
<comment type="similarity">
    <text evidence="4">Belongs to the derlin family.</text>
</comment>
<name>DERL1_DICDI</name>
<organism>
    <name type="scientific">Dictyostelium discoideum</name>
    <name type="common">Social amoeba</name>
    <dbReference type="NCBI Taxonomy" id="44689"/>
    <lineage>
        <taxon>Eukaryota</taxon>
        <taxon>Amoebozoa</taxon>
        <taxon>Evosea</taxon>
        <taxon>Eumycetozoa</taxon>
        <taxon>Dictyostelia</taxon>
        <taxon>Dictyosteliales</taxon>
        <taxon>Dictyosteliaceae</taxon>
        <taxon>Dictyostelium</taxon>
    </lineage>
</organism>